<sequence>MTALNVLIYPDDHLKVVCEPVTEVNDAIRKIVDDMFDTMYQEKGIGLAAPQVDILQRIITIDVEGDKQNQFVLINPEILASEGETGIEEGCLSIPGFRALVPRKEKVTVRALDRDGKEFTLDADGLLAICIQHEIDHLNGILFVDYLSPLKRQRIKEKLIKYKKQIAKS</sequence>
<organism>
    <name type="scientific">Haemophilus influenzae (strain PittGG)</name>
    <dbReference type="NCBI Taxonomy" id="374931"/>
    <lineage>
        <taxon>Bacteria</taxon>
        <taxon>Pseudomonadati</taxon>
        <taxon>Pseudomonadota</taxon>
        <taxon>Gammaproteobacteria</taxon>
        <taxon>Pasteurellales</taxon>
        <taxon>Pasteurellaceae</taxon>
        <taxon>Haemophilus</taxon>
    </lineage>
</organism>
<comment type="function">
    <text evidence="1">Removes the formyl group from the N-terminal Met of newly synthesized proteins. Requires at least a dipeptide for an efficient rate of reaction. N-terminal L-methionine is a prerequisite for activity but the enzyme has broad specificity at other positions.</text>
</comment>
<comment type="catalytic activity">
    <reaction evidence="1">
        <text>N-terminal N-formyl-L-methionyl-[peptide] + H2O = N-terminal L-methionyl-[peptide] + formate</text>
        <dbReference type="Rhea" id="RHEA:24420"/>
        <dbReference type="Rhea" id="RHEA-COMP:10639"/>
        <dbReference type="Rhea" id="RHEA-COMP:10640"/>
        <dbReference type="ChEBI" id="CHEBI:15377"/>
        <dbReference type="ChEBI" id="CHEBI:15740"/>
        <dbReference type="ChEBI" id="CHEBI:49298"/>
        <dbReference type="ChEBI" id="CHEBI:64731"/>
        <dbReference type="EC" id="3.5.1.88"/>
    </reaction>
</comment>
<comment type="cofactor">
    <cofactor evidence="1">
        <name>Fe(2+)</name>
        <dbReference type="ChEBI" id="CHEBI:29033"/>
    </cofactor>
    <text evidence="1">Binds 1 Fe(2+) ion.</text>
</comment>
<comment type="similarity">
    <text evidence="1">Belongs to the polypeptide deformylase family.</text>
</comment>
<gene>
    <name evidence="1" type="primary">def</name>
    <name type="ordered locus">CGSHiGG_06235</name>
</gene>
<protein>
    <recommendedName>
        <fullName evidence="1">Peptide deformylase</fullName>
        <shortName evidence="1">PDF</shortName>
        <ecNumber evidence="1">3.5.1.88</ecNumber>
    </recommendedName>
    <alternativeName>
        <fullName evidence="1">Polypeptide deformylase</fullName>
    </alternativeName>
</protein>
<proteinExistence type="inferred from homology"/>
<evidence type="ECO:0000255" key="1">
    <source>
        <dbReference type="HAMAP-Rule" id="MF_00163"/>
    </source>
</evidence>
<dbReference type="EC" id="3.5.1.88" evidence="1"/>
<dbReference type="EMBL" id="CP000672">
    <property type="protein sequence ID" value="ABR00148.1"/>
    <property type="molecule type" value="Genomic_DNA"/>
</dbReference>
<dbReference type="SMR" id="A5UH92"/>
<dbReference type="KEGG" id="hiq:CGSHiGG_06235"/>
<dbReference type="HOGENOM" id="CLU_061901_2_1_6"/>
<dbReference type="Proteomes" id="UP000001990">
    <property type="component" value="Chromosome"/>
</dbReference>
<dbReference type="GO" id="GO:0046872">
    <property type="term" value="F:metal ion binding"/>
    <property type="evidence" value="ECO:0007669"/>
    <property type="project" value="UniProtKB-KW"/>
</dbReference>
<dbReference type="GO" id="GO:0042586">
    <property type="term" value="F:peptide deformylase activity"/>
    <property type="evidence" value="ECO:0007669"/>
    <property type="project" value="UniProtKB-UniRule"/>
</dbReference>
<dbReference type="GO" id="GO:0043686">
    <property type="term" value="P:co-translational protein modification"/>
    <property type="evidence" value="ECO:0007669"/>
    <property type="project" value="TreeGrafter"/>
</dbReference>
<dbReference type="GO" id="GO:0006412">
    <property type="term" value="P:translation"/>
    <property type="evidence" value="ECO:0007669"/>
    <property type="project" value="UniProtKB-UniRule"/>
</dbReference>
<dbReference type="CDD" id="cd00487">
    <property type="entry name" value="Pep_deformylase"/>
    <property type="match status" value="1"/>
</dbReference>
<dbReference type="FunFam" id="3.90.45.10:FF:000001">
    <property type="entry name" value="Peptide deformylase"/>
    <property type="match status" value="1"/>
</dbReference>
<dbReference type="Gene3D" id="3.90.45.10">
    <property type="entry name" value="Peptide deformylase"/>
    <property type="match status" value="1"/>
</dbReference>
<dbReference type="HAMAP" id="MF_00163">
    <property type="entry name" value="Pep_deformylase"/>
    <property type="match status" value="1"/>
</dbReference>
<dbReference type="InterPro" id="IPR023635">
    <property type="entry name" value="Peptide_deformylase"/>
</dbReference>
<dbReference type="InterPro" id="IPR036821">
    <property type="entry name" value="Peptide_deformylase_sf"/>
</dbReference>
<dbReference type="NCBIfam" id="TIGR00079">
    <property type="entry name" value="pept_deformyl"/>
    <property type="match status" value="1"/>
</dbReference>
<dbReference type="NCBIfam" id="NF001159">
    <property type="entry name" value="PRK00150.1-3"/>
    <property type="match status" value="1"/>
</dbReference>
<dbReference type="PANTHER" id="PTHR10458">
    <property type="entry name" value="PEPTIDE DEFORMYLASE"/>
    <property type="match status" value="1"/>
</dbReference>
<dbReference type="PANTHER" id="PTHR10458:SF21">
    <property type="entry name" value="PEPTIDE DEFORMYLASE"/>
    <property type="match status" value="1"/>
</dbReference>
<dbReference type="Pfam" id="PF01327">
    <property type="entry name" value="Pep_deformylase"/>
    <property type="match status" value="1"/>
</dbReference>
<dbReference type="PIRSF" id="PIRSF004749">
    <property type="entry name" value="Pep_def"/>
    <property type="match status" value="1"/>
</dbReference>
<dbReference type="PRINTS" id="PR01576">
    <property type="entry name" value="PDEFORMYLASE"/>
</dbReference>
<dbReference type="SUPFAM" id="SSF56420">
    <property type="entry name" value="Peptide deformylase"/>
    <property type="match status" value="1"/>
</dbReference>
<accession>A5UH92</accession>
<name>DEF_HAEIG</name>
<keyword id="KW-0378">Hydrolase</keyword>
<keyword id="KW-0408">Iron</keyword>
<keyword id="KW-0479">Metal-binding</keyword>
<keyword id="KW-0648">Protein biosynthesis</keyword>
<reference key="1">
    <citation type="journal article" date="2007" name="Genome Biol.">
        <title>Characterization and modeling of the Haemophilus influenzae core and supragenomes based on the complete genomic sequences of Rd and 12 clinical nontypeable strains.</title>
        <authorList>
            <person name="Hogg J.S."/>
            <person name="Hu F.Z."/>
            <person name="Janto B."/>
            <person name="Boissy R."/>
            <person name="Hayes J."/>
            <person name="Keefe R."/>
            <person name="Post J.C."/>
            <person name="Ehrlich G.D."/>
        </authorList>
    </citation>
    <scope>NUCLEOTIDE SEQUENCE [LARGE SCALE GENOMIC DNA]</scope>
    <source>
        <strain>PittGG</strain>
    </source>
</reference>
<feature type="chain" id="PRO_1000023130" description="Peptide deformylase">
    <location>
        <begin position="1"/>
        <end position="169"/>
    </location>
</feature>
<feature type="active site" evidence="1">
    <location>
        <position position="134"/>
    </location>
</feature>
<feature type="binding site" evidence="1">
    <location>
        <position position="91"/>
    </location>
    <ligand>
        <name>Fe cation</name>
        <dbReference type="ChEBI" id="CHEBI:24875"/>
    </ligand>
</feature>
<feature type="binding site" evidence="1">
    <location>
        <position position="133"/>
    </location>
    <ligand>
        <name>Fe cation</name>
        <dbReference type="ChEBI" id="CHEBI:24875"/>
    </ligand>
</feature>
<feature type="binding site" evidence="1">
    <location>
        <position position="137"/>
    </location>
    <ligand>
        <name>Fe cation</name>
        <dbReference type="ChEBI" id="CHEBI:24875"/>
    </ligand>
</feature>